<feature type="chain" id="PRO_0000446188" description="Phospholipase A1" evidence="7">
    <location>
        <begin position="1"/>
        <end position="300"/>
    </location>
</feature>
<feature type="active site" description="Nucleophile">
    <location>
        <position position="137"/>
    </location>
</feature>
<feature type="active site" description="Charge relay system" evidence="2">
    <location>
        <position position="165"/>
    </location>
</feature>
<feature type="active site" description="Charge relay system" evidence="2">
    <location>
        <position position="229"/>
    </location>
</feature>
<feature type="disulfide bond" evidence="3 9">
    <location>
        <begin position="4"/>
        <end position="87"/>
    </location>
</feature>
<feature type="disulfide bond" evidence="3 9">
    <location>
        <begin position="176"/>
        <end position="181"/>
    </location>
</feature>
<feature type="disulfide bond" evidence="3 9">
    <location>
        <begin position="218"/>
        <end position="227"/>
    </location>
</feature>
<feature type="disulfide bond" evidence="3 9">
    <location>
        <begin position="244"/>
        <end position="268"/>
    </location>
</feature>
<feature type="disulfide bond" evidence="3 9">
    <location>
        <begin position="245"/>
        <end position="293"/>
    </location>
</feature>
<feature type="disulfide bond" evidence="3 9">
    <location>
        <begin position="261"/>
        <end position="266"/>
    </location>
</feature>
<feature type="helix" evidence="10">
    <location>
        <begin position="8"/>
        <end position="10"/>
    </location>
</feature>
<feature type="strand" evidence="10">
    <location>
        <begin position="12"/>
        <end position="17"/>
    </location>
</feature>
<feature type="helix" evidence="10">
    <location>
        <begin position="30"/>
        <end position="33"/>
    </location>
</feature>
<feature type="helix" evidence="10">
    <location>
        <begin position="35"/>
        <end position="37"/>
    </location>
</feature>
<feature type="strand" evidence="10">
    <location>
        <begin position="44"/>
        <end position="50"/>
    </location>
</feature>
<feature type="helix" evidence="10">
    <location>
        <begin position="60"/>
        <end position="70"/>
    </location>
</feature>
<feature type="strand" evidence="10">
    <location>
        <begin position="73"/>
        <end position="81"/>
    </location>
</feature>
<feature type="turn" evidence="10">
    <location>
        <begin position="83"/>
        <end position="90"/>
    </location>
</feature>
<feature type="helix" evidence="10">
    <location>
        <begin position="95"/>
        <end position="124"/>
    </location>
</feature>
<feature type="helix" evidence="10">
    <location>
        <begin position="128"/>
        <end position="130"/>
    </location>
</feature>
<feature type="strand" evidence="10">
    <location>
        <begin position="131"/>
        <end position="136"/>
    </location>
</feature>
<feature type="helix" evidence="10">
    <location>
        <begin position="138"/>
        <end position="152"/>
    </location>
</feature>
<feature type="strand" evidence="10">
    <location>
        <begin position="158"/>
        <end position="165"/>
    </location>
</feature>
<feature type="turn" evidence="10">
    <location>
        <begin position="169"/>
        <end position="173"/>
    </location>
</feature>
<feature type="helix" evidence="10">
    <location>
        <begin position="176"/>
        <end position="178"/>
    </location>
</feature>
<feature type="strand" evidence="10">
    <location>
        <begin position="184"/>
        <end position="192"/>
    </location>
</feature>
<feature type="strand" evidence="10">
    <location>
        <begin position="195"/>
        <end position="198"/>
    </location>
</feature>
<feature type="strand" evidence="10">
    <location>
        <begin position="204"/>
        <end position="214"/>
    </location>
</feature>
<feature type="turn" evidence="10">
    <location>
        <begin position="221"/>
        <end position="224"/>
    </location>
</feature>
<feature type="helix" evidence="10">
    <location>
        <begin position="225"/>
        <end position="241"/>
    </location>
</feature>
<feature type="strand" evidence="10">
    <location>
        <begin position="245"/>
        <end position="250"/>
    </location>
</feature>
<feature type="turn" evidence="10">
    <location>
        <begin position="263"/>
        <end position="265"/>
    </location>
</feature>
<feature type="helix" evidence="10">
    <location>
        <begin position="273"/>
        <end position="275"/>
    </location>
</feature>
<feature type="strand" evidence="10">
    <location>
        <begin position="280"/>
        <end position="283"/>
    </location>
</feature>
<dbReference type="EC" id="3.1.1.32" evidence="1"/>
<dbReference type="PDB" id="4QNN">
    <property type="method" value="X-ray"/>
    <property type="resolution" value="2.50 A"/>
    <property type="chains" value="A/B/C/D=1-300"/>
</dbReference>
<dbReference type="PDBsum" id="4QNN"/>
<dbReference type="SMR" id="A0A0M3KKW3"/>
<dbReference type="ESTHER" id="vesba-pa1">
    <property type="family name" value="Insect_Phospholipase"/>
</dbReference>
<dbReference type="EvolutionaryTrace" id="A0A0M3KKW3"/>
<dbReference type="GO" id="GO:0005615">
    <property type="term" value="C:extracellular space"/>
    <property type="evidence" value="ECO:0007669"/>
    <property type="project" value="TreeGrafter"/>
</dbReference>
<dbReference type="GO" id="GO:0008970">
    <property type="term" value="F:phospholipase A1 activity"/>
    <property type="evidence" value="ECO:0007669"/>
    <property type="project" value="UniProtKB-EC"/>
</dbReference>
<dbReference type="GO" id="GO:0031640">
    <property type="term" value="P:killing of cells of another organism"/>
    <property type="evidence" value="ECO:0007669"/>
    <property type="project" value="UniProtKB-KW"/>
</dbReference>
<dbReference type="GO" id="GO:0016042">
    <property type="term" value="P:lipid catabolic process"/>
    <property type="evidence" value="ECO:0007669"/>
    <property type="project" value="TreeGrafter"/>
</dbReference>
<dbReference type="Gene3D" id="3.40.50.1820">
    <property type="entry name" value="alpha/beta hydrolase"/>
    <property type="match status" value="1"/>
</dbReference>
<dbReference type="InterPro" id="IPR029058">
    <property type="entry name" value="AB_hydrolase_fold"/>
</dbReference>
<dbReference type="InterPro" id="IPR002334">
    <property type="entry name" value="Allerg_PlipaseA1"/>
</dbReference>
<dbReference type="InterPro" id="IPR013818">
    <property type="entry name" value="Lipase"/>
</dbReference>
<dbReference type="InterPro" id="IPR000734">
    <property type="entry name" value="TAG_lipase"/>
</dbReference>
<dbReference type="PANTHER" id="PTHR11610">
    <property type="entry name" value="LIPASE"/>
    <property type="match status" value="1"/>
</dbReference>
<dbReference type="PANTHER" id="PTHR11610:SF178">
    <property type="entry name" value="LIPASE MEMBER H-A-LIKE PROTEIN"/>
    <property type="match status" value="1"/>
</dbReference>
<dbReference type="Pfam" id="PF00151">
    <property type="entry name" value="Lipase"/>
    <property type="match status" value="1"/>
</dbReference>
<dbReference type="PRINTS" id="PR00825">
    <property type="entry name" value="DOLALLERGEN"/>
</dbReference>
<dbReference type="SUPFAM" id="SSF53474">
    <property type="entry name" value="alpha/beta-Hydrolases"/>
    <property type="match status" value="1"/>
</dbReference>
<dbReference type="PROSITE" id="PS00120">
    <property type="entry name" value="LIPASE_SER"/>
    <property type="match status" value="1"/>
</dbReference>
<organism>
    <name type="scientific">Vespa basalis</name>
    <name type="common">Hornet</name>
    <dbReference type="NCBI Taxonomy" id="7444"/>
    <lineage>
        <taxon>Eukaryota</taxon>
        <taxon>Metazoa</taxon>
        <taxon>Ecdysozoa</taxon>
        <taxon>Arthropoda</taxon>
        <taxon>Hexapoda</taxon>
        <taxon>Insecta</taxon>
        <taxon>Pterygota</taxon>
        <taxon>Neoptera</taxon>
        <taxon>Endopterygota</taxon>
        <taxon>Hymenoptera</taxon>
        <taxon>Apocrita</taxon>
        <taxon>Aculeata</taxon>
        <taxon>Vespoidea</taxon>
        <taxon>Vespidae</taxon>
        <taxon>Vespinae</taxon>
        <taxon>Vespa</taxon>
    </lineage>
</organism>
<evidence type="ECO:0000250" key="1">
    <source>
        <dbReference type="UniProtKB" id="P0DMB4"/>
    </source>
</evidence>
<evidence type="ECO:0000255" key="2">
    <source>
        <dbReference type="PROSITE-ProRule" id="PRU10037"/>
    </source>
</evidence>
<evidence type="ECO:0000269" key="3">
    <source>
    </source>
</evidence>
<evidence type="ECO:0000269" key="4">
    <source>
    </source>
</evidence>
<evidence type="ECO:0000303" key="5">
    <source>
    </source>
</evidence>
<evidence type="ECO:0000305" key="6"/>
<evidence type="ECO:0000305" key="7">
    <source>
    </source>
</evidence>
<evidence type="ECO:0000305" key="8">
    <source>
    </source>
</evidence>
<evidence type="ECO:0000312" key="9">
    <source>
        <dbReference type="PDB" id="4QNN"/>
    </source>
</evidence>
<evidence type="ECO:0007829" key="10">
    <source>
        <dbReference type="PDB" id="4QNN"/>
    </source>
</evidence>
<reference key="1">
    <citation type="journal article" date="2016" name="Insect Biochem. Mol. Biol.">
        <title>Crystal structure of vespid phospholipase A(1) reveals insights into the mechanism for cause of membrane dysfunction.</title>
        <authorList>
            <person name="Hou M.H."/>
            <person name="Chuang C.Y."/>
            <person name="Ko T.P."/>
            <person name="Hu N.J."/>
            <person name="Chou C.C."/>
            <person name="Shih Y.P."/>
            <person name="Ho C.L."/>
            <person name="Wang A.H."/>
        </authorList>
    </citation>
    <scope>NUCLEOTIDE SEQUENCE [MRNA]</scope>
    <scope>X-RAY CRYSTALLOGRAPHY (2.5 ANGSTROMS)</scope>
    <scope>3D-STRUCTURE MODELING IN COMPLEX WITH PHOSPHOLIPID PC</scope>
    <scope>DISULFIDE BOND</scope>
    <source>
        <tissue>Venom</tissue>
        <tissue>Venom gland</tissue>
    </source>
</reference>
<reference key="2">
    <citation type="journal article" date="1993" name="Toxicon">
        <title>Edema-inducing activity of a lethal protein with phospholipase A1 activity isolated from the black-bellied hornet (Vespa basalis) venom.</title>
        <authorList>
            <person name="Ho C.L."/>
            <person name="Hwang L.L."/>
            <person name="Chen C.T."/>
        </authorList>
    </citation>
    <scope>FUNCTION</scope>
    <scope>SUBCELLULAR LOCATION</scope>
</reference>
<comment type="function">
    <text evidence="1 4 7">Catalyzes the hydrolysis of phosphatidylcholine with phospholipase A1 activity (By similarity). Shows potent hemolytic activity that is responsible for its lethal effect (PubMed:26603193). May act as an allergen (By similarity). In vivo, induces local inflammatory effects (PubMed:7687388).</text>
</comment>
<comment type="catalytic activity">
    <reaction evidence="1">
        <text>a 1,2-diacyl-sn-glycero-3-phosphocholine + H2O = a 2-acyl-sn-glycero-3-phosphocholine + a fatty acid + H(+)</text>
        <dbReference type="Rhea" id="RHEA:18689"/>
        <dbReference type="ChEBI" id="CHEBI:15377"/>
        <dbReference type="ChEBI" id="CHEBI:15378"/>
        <dbReference type="ChEBI" id="CHEBI:28868"/>
        <dbReference type="ChEBI" id="CHEBI:57643"/>
        <dbReference type="ChEBI" id="CHEBI:57875"/>
        <dbReference type="EC" id="3.1.1.32"/>
    </reaction>
</comment>
<comment type="activity regulation">
    <text evidence="4">Local inflammatory effects are inhibited by antiserotonin drugs (cyproheptadine and methysergide), indomethacin, betamethasone, and antihistamine (chlorpheniramine).</text>
</comment>
<comment type="subcellular location">
    <subcellularLocation>
        <location evidence="4">Secreted</location>
    </subcellularLocation>
</comment>
<comment type="tissue specificity">
    <text evidence="8">Expressed by the venom gland.</text>
</comment>
<comment type="similarity">
    <text evidence="6">Belongs to the AB hydrolase superfamily. Lipase family.</text>
</comment>
<comment type="caution">
    <text evidence="7">Nucleotide sequence indicated is deduced from the source 'expression system E.coli' written in PDB 4QNN file.</text>
</comment>
<accession>A0A0M3KKW3</accession>
<name>PA1_VESBA</name>
<sequence>FNPCPYSDDTVKMIILTRENKKHDFYTLDTIKKHNEFKKSTIKHQVVFITHGFTSSADTENFLAMAKALSDKGNYLVILIDWRVAACTEEMSGIQLAYYSYAASNTRLVGNYIATVTKMLVQKYNVPMANIRLIGHSLGAHTSGFAGKKVQELGLGKYSEIIGLDPAGPSFKSNDCSERICKTDAHYVQIIHTSNHLGTLVTLGTVDFMNNGYNQPGCGLPLIGETCSHTRAVKYFTECIKHECCLIGVPQSKKPQPVSKCTRNECVCVGLNAKTYPKTGSFYVPVESKAPYCNNKGKII</sequence>
<proteinExistence type="evidence at protein level"/>
<protein>
    <recommendedName>
        <fullName evidence="5">Phospholipase A1</fullName>
        <shortName evidence="5">vPLA1</shortName>
        <ecNumber evidence="1">3.1.1.32</ecNumber>
    </recommendedName>
</protein>
<keyword id="KW-0002">3D-structure</keyword>
<keyword id="KW-0204">Cytolysis</keyword>
<keyword id="KW-1015">Disulfide bond</keyword>
<keyword id="KW-0354">Hemolysis</keyword>
<keyword id="KW-0378">Hydrolase</keyword>
<keyword id="KW-0964">Secreted</keyword>